<keyword id="KW-0963">Cytoplasm</keyword>
<keyword id="KW-0489">Methyltransferase</keyword>
<keyword id="KW-0698">rRNA processing</keyword>
<keyword id="KW-0949">S-adenosyl-L-methionine</keyword>
<keyword id="KW-0808">Transferase</keyword>
<feature type="chain" id="PRO_0000184304" description="Ribosomal RNA small subunit methyltransferase G">
    <location>
        <begin position="1"/>
        <end position="239"/>
    </location>
</feature>
<feature type="binding site" evidence="1">
    <location>
        <position position="76"/>
    </location>
    <ligand>
        <name>S-adenosyl-L-methionine</name>
        <dbReference type="ChEBI" id="CHEBI:59789"/>
    </ligand>
</feature>
<feature type="binding site" evidence="1">
    <location>
        <position position="81"/>
    </location>
    <ligand>
        <name>S-adenosyl-L-methionine</name>
        <dbReference type="ChEBI" id="CHEBI:59789"/>
    </ligand>
</feature>
<feature type="binding site" evidence="1">
    <location>
        <begin position="99"/>
        <end position="101"/>
    </location>
    <ligand>
        <name>S-adenosyl-L-methionine</name>
        <dbReference type="ChEBI" id="CHEBI:59789"/>
    </ligand>
</feature>
<feature type="binding site" evidence="1">
    <location>
        <begin position="128"/>
        <end position="129"/>
    </location>
    <ligand>
        <name>S-adenosyl-L-methionine</name>
        <dbReference type="ChEBI" id="CHEBI:59789"/>
    </ligand>
</feature>
<feature type="binding site" evidence="1">
    <location>
        <position position="147"/>
    </location>
    <ligand>
        <name>S-adenosyl-L-methionine</name>
        <dbReference type="ChEBI" id="CHEBI:59789"/>
    </ligand>
</feature>
<name>RSMG_PROMP</name>
<sequence>MTKESIPNELLNLLNEEEIIMFRELQIKIQELNYKTNLTRLIEGDDYWISQVYDSLWTFKENTNKNFDNKKFIDIGSGCGFPGFAYAITHPNSEIYLVDSSKKKTDSLKEIIKSIKFKNDIFVINDRIENIGRQSSFKNGFNIATARAVSNPSTVSEYILPMLKSNGLGILYCGKWTNEDNKNLEKTLNVLEGQILEIKSNFLPREKGMRNVIFIEPKASCPDIYPRSIGKAEKYPLKG</sequence>
<organism>
    <name type="scientific">Prochlorococcus marinus subsp. pastoris (strain CCMP1986 / NIES-2087 / MED4)</name>
    <dbReference type="NCBI Taxonomy" id="59919"/>
    <lineage>
        <taxon>Bacteria</taxon>
        <taxon>Bacillati</taxon>
        <taxon>Cyanobacteriota</taxon>
        <taxon>Cyanophyceae</taxon>
        <taxon>Synechococcales</taxon>
        <taxon>Prochlorococcaceae</taxon>
        <taxon>Prochlorococcus</taxon>
    </lineage>
</organism>
<proteinExistence type="inferred from homology"/>
<protein>
    <recommendedName>
        <fullName evidence="1">Ribosomal RNA small subunit methyltransferase G</fullName>
        <ecNumber evidence="1">2.1.1.-</ecNumber>
    </recommendedName>
    <alternativeName>
        <fullName evidence="1">16S rRNA 7-methylguanosine methyltransferase</fullName>
        <shortName evidence="1">16S rRNA m7G methyltransferase</shortName>
    </alternativeName>
</protein>
<dbReference type="EC" id="2.1.1.-" evidence="1"/>
<dbReference type="EMBL" id="BX548174">
    <property type="protein sequence ID" value="CAE19934.1"/>
    <property type="molecule type" value="Genomic_DNA"/>
</dbReference>
<dbReference type="RefSeq" id="WP_011133103.1">
    <property type="nucleotide sequence ID" value="NC_005072.1"/>
</dbReference>
<dbReference type="SMR" id="Q7V016"/>
<dbReference type="STRING" id="59919.PMM1475"/>
<dbReference type="KEGG" id="pmm:PMM1475"/>
<dbReference type="eggNOG" id="COG0357">
    <property type="taxonomic scope" value="Bacteria"/>
</dbReference>
<dbReference type="HOGENOM" id="CLU_065341_0_2_3"/>
<dbReference type="OrthoDB" id="9808773at2"/>
<dbReference type="Proteomes" id="UP000001026">
    <property type="component" value="Chromosome"/>
</dbReference>
<dbReference type="GO" id="GO:0005829">
    <property type="term" value="C:cytosol"/>
    <property type="evidence" value="ECO:0007669"/>
    <property type="project" value="TreeGrafter"/>
</dbReference>
<dbReference type="GO" id="GO:0070043">
    <property type="term" value="F:rRNA (guanine-N7-)-methyltransferase activity"/>
    <property type="evidence" value="ECO:0007669"/>
    <property type="project" value="UniProtKB-UniRule"/>
</dbReference>
<dbReference type="Gene3D" id="3.40.50.150">
    <property type="entry name" value="Vaccinia Virus protein VP39"/>
    <property type="match status" value="1"/>
</dbReference>
<dbReference type="HAMAP" id="MF_00074">
    <property type="entry name" value="16SrRNA_methyltr_G"/>
    <property type="match status" value="1"/>
</dbReference>
<dbReference type="InterPro" id="IPR003682">
    <property type="entry name" value="rRNA_ssu_MeTfrase_G"/>
</dbReference>
<dbReference type="InterPro" id="IPR029063">
    <property type="entry name" value="SAM-dependent_MTases_sf"/>
</dbReference>
<dbReference type="NCBIfam" id="TIGR00138">
    <property type="entry name" value="rsmG_gidB"/>
    <property type="match status" value="1"/>
</dbReference>
<dbReference type="PANTHER" id="PTHR31760">
    <property type="entry name" value="S-ADENOSYL-L-METHIONINE-DEPENDENT METHYLTRANSFERASES SUPERFAMILY PROTEIN"/>
    <property type="match status" value="1"/>
</dbReference>
<dbReference type="PANTHER" id="PTHR31760:SF0">
    <property type="entry name" value="S-ADENOSYL-L-METHIONINE-DEPENDENT METHYLTRANSFERASES SUPERFAMILY PROTEIN"/>
    <property type="match status" value="1"/>
</dbReference>
<dbReference type="Pfam" id="PF02527">
    <property type="entry name" value="GidB"/>
    <property type="match status" value="1"/>
</dbReference>
<dbReference type="SUPFAM" id="SSF53335">
    <property type="entry name" value="S-adenosyl-L-methionine-dependent methyltransferases"/>
    <property type="match status" value="1"/>
</dbReference>
<gene>
    <name evidence="1" type="primary">rsmG</name>
    <name type="ordered locus">PMM1475</name>
</gene>
<reference key="1">
    <citation type="journal article" date="2003" name="Nature">
        <title>Genome divergence in two Prochlorococcus ecotypes reflects oceanic niche differentiation.</title>
        <authorList>
            <person name="Rocap G."/>
            <person name="Larimer F.W."/>
            <person name="Lamerdin J.E."/>
            <person name="Malfatti S."/>
            <person name="Chain P."/>
            <person name="Ahlgren N.A."/>
            <person name="Arellano A."/>
            <person name="Coleman M."/>
            <person name="Hauser L."/>
            <person name="Hess W.R."/>
            <person name="Johnson Z.I."/>
            <person name="Land M.L."/>
            <person name="Lindell D."/>
            <person name="Post A.F."/>
            <person name="Regala W."/>
            <person name="Shah M."/>
            <person name="Shaw S.L."/>
            <person name="Steglich C."/>
            <person name="Sullivan M.B."/>
            <person name="Ting C.S."/>
            <person name="Tolonen A."/>
            <person name="Webb E.A."/>
            <person name="Zinser E.R."/>
            <person name="Chisholm S.W."/>
        </authorList>
    </citation>
    <scope>NUCLEOTIDE SEQUENCE [LARGE SCALE GENOMIC DNA]</scope>
    <source>
        <strain>CCMP1986 / NIES-2087 / MED4</strain>
    </source>
</reference>
<comment type="function">
    <text evidence="1">Specifically methylates the N7 position of a guanine in 16S rRNA.</text>
</comment>
<comment type="subcellular location">
    <subcellularLocation>
        <location evidence="1">Cytoplasm</location>
    </subcellularLocation>
</comment>
<comment type="similarity">
    <text evidence="1">Belongs to the methyltransferase superfamily. RNA methyltransferase RsmG family.</text>
</comment>
<evidence type="ECO:0000255" key="1">
    <source>
        <dbReference type="HAMAP-Rule" id="MF_00074"/>
    </source>
</evidence>
<accession>Q7V016</accession>